<accession>Q6FD81</accession>
<evidence type="ECO:0000255" key="1">
    <source>
        <dbReference type="HAMAP-Rule" id="MF_00822"/>
    </source>
</evidence>
<keyword id="KW-0143">Chaperone</keyword>
<keyword id="KW-0963">Cytoplasm</keyword>
<keyword id="KW-0533">Nickel</keyword>
<keyword id="KW-0996">Nickel insertion</keyword>
<name>UREE_ACIAD</name>
<organism>
    <name type="scientific">Acinetobacter baylyi (strain ATCC 33305 / BD413 / ADP1)</name>
    <dbReference type="NCBI Taxonomy" id="62977"/>
    <lineage>
        <taxon>Bacteria</taxon>
        <taxon>Pseudomonadati</taxon>
        <taxon>Pseudomonadota</taxon>
        <taxon>Gammaproteobacteria</taxon>
        <taxon>Moraxellales</taxon>
        <taxon>Moraxellaceae</taxon>
        <taxon>Acinetobacter</taxon>
    </lineage>
</organism>
<gene>
    <name evidence="1" type="primary">ureE</name>
    <name type="ordered locus">ACIAD1093</name>
</gene>
<dbReference type="EMBL" id="CR543861">
    <property type="protein sequence ID" value="CAG67978.1"/>
    <property type="molecule type" value="Genomic_DNA"/>
</dbReference>
<dbReference type="RefSeq" id="WP_004921556.1">
    <property type="nucleotide sequence ID" value="NC_005966.1"/>
</dbReference>
<dbReference type="SMR" id="Q6FD81"/>
<dbReference type="STRING" id="202950.GCA_001485005_01274"/>
<dbReference type="GeneID" id="45233529"/>
<dbReference type="KEGG" id="aci:ACIAD1093"/>
<dbReference type="eggNOG" id="COG2371">
    <property type="taxonomic scope" value="Bacteria"/>
</dbReference>
<dbReference type="HOGENOM" id="CLU_093757_2_0_6"/>
<dbReference type="OrthoDB" id="5421304at2"/>
<dbReference type="BioCyc" id="ASP62977:ACIAD_RS05025-MONOMER"/>
<dbReference type="Proteomes" id="UP000000430">
    <property type="component" value="Chromosome"/>
</dbReference>
<dbReference type="GO" id="GO:0005737">
    <property type="term" value="C:cytoplasm"/>
    <property type="evidence" value="ECO:0007669"/>
    <property type="project" value="UniProtKB-SubCell"/>
</dbReference>
<dbReference type="GO" id="GO:0016151">
    <property type="term" value="F:nickel cation binding"/>
    <property type="evidence" value="ECO:0007669"/>
    <property type="project" value="UniProtKB-UniRule"/>
</dbReference>
<dbReference type="GO" id="GO:0051082">
    <property type="term" value="F:unfolded protein binding"/>
    <property type="evidence" value="ECO:0007669"/>
    <property type="project" value="UniProtKB-UniRule"/>
</dbReference>
<dbReference type="GO" id="GO:0006457">
    <property type="term" value="P:protein folding"/>
    <property type="evidence" value="ECO:0007669"/>
    <property type="project" value="InterPro"/>
</dbReference>
<dbReference type="GO" id="GO:0065003">
    <property type="term" value="P:protein-containing complex assembly"/>
    <property type="evidence" value="ECO:0007669"/>
    <property type="project" value="InterPro"/>
</dbReference>
<dbReference type="GO" id="GO:0019627">
    <property type="term" value="P:urea metabolic process"/>
    <property type="evidence" value="ECO:0007669"/>
    <property type="project" value="InterPro"/>
</dbReference>
<dbReference type="CDD" id="cd00571">
    <property type="entry name" value="UreE"/>
    <property type="match status" value="1"/>
</dbReference>
<dbReference type="Gene3D" id="2.60.260.20">
    <property type="entry name" value="Urease metallochaperone UreE, N-terminal domain"/>
    <property type="match status" value="1"/>
</dbReference>
<dbReference type="Gene3D" id="3.30.70.790">
    <property type="entry name" value="UreE, C-terminal domain"/>
    <property type="match status" value="1"/>
</dbReference>
<dbReference type="HAMAP" id="MF_00822">
    <property type="entry name" value="UreE"/>
    <property type="match status" value="1"/>
</dbReference>
<dbReference type="InterPro" id="IPR012406">
    <property type="entry name" value="UreE"/>
</dbReference>
<dbReference type="InterPro" id="IPR007864">
    <property type="entry name" value="UreE_C_dom"/>
</dbReference>
<dbReference type="InterPro" id="IPR004029">
    <property type="entry name" value="UreE_N"/>
</dbReference>
<dbReference type="InterPro" id="IPR036118">
    <property type="entry name" value="UreE_N_sf"/>
</dbReference>
<dbReference type="NCBIfam" id="NF009751">
    <property type="entry name" value="PRK13261.1-1"/>
    <property type="match status" value="1"/>
</dbReference>
<dbReference type="Pfam" id="PF05194">
    <property type="entry name" value="UreE_C"/>
    <property type="match status" value="1"/>
</dbReference>
<dbReference type="Pfam" id="PF02814">
    <property type="entry name" value="UreE_N"/>
    <property type="match status" value="1"/>
</dbReference>
<dbReference type="PIRSF" id="PIRSF036402">
    <property type="entry name" value="Ureas_acces_UreE"/>
    <property type="match status" value="1"/>
</dbReference>
<dbReference type="SMART" id="SM00988">
    <property type="entry name" value="UreE_N"/>
    <property type="match status" value="1"/>
</dbReference>
<dbReference type="SUPFAM" id="SSF69737">
    <property type="entry name" value="Urease metallochaperone UreE, C-terminal domain"/>
    <property type="match status" value="1"/>
</dbReference>
<dbReference type="SUPFAM" id="SSF69287">
    <property type="entry name" value="Urease metallochaperone UreE, N-terminal domain"/>
    <property type="match status" value="1"/>
</dbReference>
<sequence length="159" mass="18035">MKIYTQRLDEIASDQTFETLELTFDTRQKSRFRATLTNGTDIGADLPRTGILRSGSFIATNEGDILRIDAKPEQLMQVTAKTDFELLKAAYHLGNRHVPLMLTPYALYFEPDHVLAEMVEGLGLQVKQVEHAFEPESGAYAQHNHDHRLSPIKSLHHVH</sequence>
<comment type="function">
    <text evidence="1">Involved in urease metallocenter assembly. Binds nickel. Probably functions as a nickel donor during metallocenter assembly.</text>
</comment>
<comment type="subcellular location">
    <subcellularLocation>
        <location evidence="1">Cytoplasm</location>
    </subcellularLocation>
</comment>
<comment type="similarity">
    <text evidence="1">Belongs to the UreE family.</text>
</comment>
<reference key="1">
    <citation type="journal article" date="2004" name="Nucleic Acids Res.">
        <title>Unique features revealed by the genome sequence of Acinetobacter sp. ADP1, a versatile and naturally transformation competent bacterium.</title>
        <authorList>
            <person name="Barbe V."/>
            <person name="Vallenet D."/>
            <person name="Fonknechten N."/>
            <person name="Kreimeyer A."/>
            <person name="Oztas S."/>
            <person name="Labarre L."/>
            <person name="Cruveiller S."/>
            <person name="Robert C."/>
            <person name="Duprat S."/>
            <person name="Wincker P."/>
            <person name="Ornston L.N."/>
            <person name="Weissenbach J."/>
            <person name="Marliere P."/>
            <person name="Cohen G.N."/>
            <person name="Medigue C."/>
        </authorList>
    </citation>
    <scope>NUCLEOTIDE SEQUENCE [LARGE SCALE GENOMIC DNA]</scope>
    <source>
        <strain>ATCC 33305 / BD413 / ADP1</strain>
    </source>
</reference>
<feature type="chain" id="PRO_0000223396" description="Urease accessory protein UreE">
    <location>
        <begin position="1"/>
        <end position="159"/>
    </location>
</feature>
<protein>
    <recommendedName>
        <fullName evidence="1">Urease accessory protein UreE</fullName>
    </recommendedName>
</protein>
<proteinExistence type="inferred from homology"/>